<feature type="chain" id="PRO_1000197992" description="Queuine tRNA-ribosyltransferase">
    <location>
        <begin position="1"/>
        <end position="373"/>
    </location>
</feature>
<feature type="region of interest" description="RNA binding" evidence="1">
    <location>
        <begin position="249"/>
        <end position="255"/>
    </location>
</feature>
<feature type="region of interest" description="RNA binding; important for wobble base 34 recognition" evidence="1">
    <location>
        <begin position="273"/>
        <end position="277"/>
    </location>
</feature>
<feature type="active site" description="Proton acceptor" evidence="1">
    <location>
        <position position="94"/>
    </location>
</feature>
<feature type="active site" description="Nucleophile" evidence="1">
    <location>
        <position position="268"/>
    </location>
</feature>
<feature type="binding site" evidence="1">
    <location>
        <begin position="94"/>
        <end position="98"/>
    </location>
    <ligand>
        <name>substrate</name>
    </ligand>
</feature>
<feature type="binding site" evidence="1">
    <location>
        <position position="148"/>
    </location>
    <ligand>
        <name>substrate</name>
    </ligand>
</feature>
<feature type="binding site" evidence="1">
    <location>
        <position position="191"/>
    </location>
    <ligand>
        <name>substrate</name>
    </ligand>
</feature>
<feature type="binding site" evidence="1">
    <location>
        <position position="218"/>
    </location>
    <ligand>
        <name>substrate</name>
    </ligand>
</feature>
<feature type="binding site" evidence="1">
    <location>
        <position position="306"/>
    </location>
    <ligand>
        <name>Zn(2+)</name>
        <dbReference type="ChEBI" id="CHEBI:29105"/>
    </ligand>
</feature>
<feature type="binding site" evidence="1">
    <location>
        <position position="308"/>
    </location>
    <ligand>
        <name>Zn(2+)</name>
        <dbReference type="ChEBI" id="CHEBI:29105"/>
    </ligand>
</feature>
<feature type="binding site" evidence="1">
    <location>
        <position position="311"/>
    </location>
    <ligand>
        <name>Zn(2+)</name>
        <dbReference type="ChEBI" id="CHEBI:29105"/>
    </ligand>
</feature>
<feature type="binding site" evidence="1">
    <location>
        <position position="337"/>
    </location>
    <ligand>
        <name>Zn(2+)</name>
        <dbReference type="ChEBI" id="CHEBI:29105"/>
    </ligand>
</feature>
<keyword id="KW-0328">Glycosyltransferase</keyword>
<keyword id="KW-0479">Metal-binding</keyword>
<keyword id="KW-0671">Queuosine biosynthesis</keyword>
<keyword id="KW-1185">Reference proteome</keyword>
<keyword id="KW-0808">Transferase</keyword>
<keyword id="KW-0819">tRNA processing</keyword>
<keyword id="KW-0862">Zinc</keyword>
<proteinExistence type="inferred from homology"/>
<dbReference type="EC" id="2.4.2.29" evidence="1"/>
<dbReference type="EMBL" id="CP001348">
    <property type="protein sequence ID" value="ACL74912.1"/>
    <property type="molecule type" value="Genomic_DNA"/>
</dbReference>
<dbReference type="RefSeq" id="WP_015924085.1">
    <property type="nucleotide sequence ID" value="NC_011898.1"/>
</dbReference>
<dbReference type="SMR" id="B8I6M0"/>
<dbReference type="STRING" id="394503.Ccel_0530"/>
<dbReference type="KEGG" id="cce:Ccel_0530"/>
<dbReference type="eggNOG" id="COG0343">
    <property type="taxonomic scope" value="Bacteria"/>
</dbReference>
<dbReference type="HOGENOM" id="CLU_022060_0_1_9"/>
<dbReference type="OrthoDB" id="9805417at2"/>
<dbReference type="UniPathway" id="UPA00392"/>
<dbReference type="Proteomes" id="UP000001349">
    <property type="component" value="Chromosome"/>
</dbReference>
<dbReference type="GO" id="GO:0005829">
    <property type="term" value="C:cytosol"/>
    <property type="evidence" value="ECO:0007669"/>
    <property type="project" value="TreeGrafter"/>
</dbReference>
<dbReference type="GO" id="GO:0046872">
    <property type="term" value="F:metal ion binding"/>
    <property type="evidence" value="ECO:0007669"/>
    <property type="project" value="UniProtKB-KW"/>
</dbReference>
<dbReference type="GO" id="GO:0008479">
    <property type="term" value="F:tRNA-guanosine(34) queuine transglycosylase activity"/>
    <property type="evidence" value="ECO:0007669"/>
    <property type="project" value="UniProtKB-UniRule"/>
</dbReference>
<dbReference type="GO" id="GO:0008616">
    <property type="term" value="P:queuosine biosynthetic process"/>
    <property type="evidence" value="ECO:0007669"/>
    <property type="project" value="UniProtKB-UniRule"/>
</dbReference>
<dbReference type="GO" id="GO:0002099">
    <property type="term" value="P:tRNA wobble guanine modification"/>
    <property type="evidence" value="ECO:0007669"/>
    <property type="project" value="TreeGrafter"/>
</dbReference>
<dbReference type="GO" id="GO:0101030">
    <property type="term" value="P:tRNA-guanine transglycosylation"/>
    <property type="evidence" value="ECO:0007669"/>
    <property type="project" value="InterPro"/>
</dbReference>
<dbReference type="FunFam" id="3.20.20.105:FF:000001">
    <property type="entry name" value="Queuine tRNA-ribosyltransferase"/>
    <property type="match status" value="1"/>
</dbReference>
<dbReference type="Gene3D" id="3.20.20.105">
    <property type="entry name" value="Queuine tRNA-ribosyltransferase-like"/>
    <property type="match status" value="1"/>
</dbReference>
<dbReference type="HAMAP" id="MF_00168">
    <property type="entry name" value="Q_tRNA_Tgt"/>
    <property type="match status" value="1"/>
</dbReference>
<dbReference type="InterPro" id="IPR050076">
    <property type="entry name" value="ArchSynthase1/Queuine_TRR"/>
</dbReference>
<dbReference type="InterPro" id="IPR004803">
    <property type="entry name" value="TGT"/>
</dbReference>
<dbReference type="InterPro" id="IPR036511">
    <property type="entry name" value="TGT-like_sf"/>
</dbReference>
<dbReference type="InterPro" id="IPR002616">
    <property type="entry name" value="tRNA_ribo_trans-like"/>
</dbReference>
<dbReference type="NCBIfam" id="TIGR00430">
    <property type="entry name" value="Q_tRNA_tgt"/>
    <property type="match status" value="1"/>
</dbReference>
<dbReference type="NCBIfam" id="TIGR00449">
    <property type="entry name" value="tgt_general"/>
    <property type="match status" value="1"/>
</dbReference>
<dbReference type="PANTHER" id="PTHR46499">
    <property type="entry name" value="QUEUINE TRNA-RIBOSYLTRANSFERASE"/>
    <property type="match status" value="1"/>
</dbReference>
<dbReference type="PANTHER" id="PTHR46499:SF1">
    <property type="entry name" value="QUEUINE TRNA-RIBOSYLTRANSFERASE"/>
    <property type="match status" value="1"/>
</dbReference>
<dbReference type="Pfam" id="PF01702">
    <property type="entry name" value="TGT"/>
    <property type="match status" value="1"/>
</dbReference>
<dbReference type="SUPFAM" id="SSF51713">
    <property type="entry name" value="tRNA-guanine transglycosylase"/>
    <property type="match status" value="1"/>
</dbReference>
<protein>
    <recommendedName>
        <fullName evidence="1">Queuine tRNA-ribosyltransferase</fullName>
        <ecNumber evidence="1">2.4.2.29</ecNumber>
    </recommendedName>
    <alternativeName>
        <fullName evidence="1">Guanine insertion enzyme</fullName>
    </alternativeName>
    <alternativeName>
        <fullName evidence="1">tRNA-guanine transglycosylase</fullName>
    </alternativeName>
</protein>
<name>TGT_RUMCH</name>
<gene>
    <name evidence="1" type="primary">tgt</name>
    <name type="ordered locus">Ccel_0530</name>
</gene>
<sequence>MAAVTYELIKTCKQTGARLGKVHTPHGSFDTPVFMPVGTLATVKGMSPEELKEIDARIILSNTYHCYLRPGQDIVKQAGGLHGFMNWDRPILTDSGGFQVFSLSGLRKITEEGVTFRSHLDGSKHVFTPESVMDIENDLGADIIMAFDECAPYPAEYDYVKKSMERTTRWAKRCKEAHTNTEKQSLFGIIQGGMYKELRIESANQLKELDFPGYAIGGLSVGEPAEIMYEVLDYTAPLMPADKPRYLMGVGTPDYLIEGAIRGIDMFDCVLPTRIGRNGTVLTSNGRVIIRDAKYSRDFSKLDPECDCYVCRNYSRAYIRHLIKCGELLGLRLTTWHNLYFLINLMKQVRQAIMDDKLASFRDEFYLKYGYTK</sequence>
<organism>
    <name type="scientific">Ruminiclostridium cellulolyticum (strain ATCC 35319 / DSM 5812 / JCM 6584 / H10)</name>
    <name type="common">Clostridium cellulolyticum</name>
    <dbReference type="NCBI Taxonomy" id="394503"/>
    <lineage>
        <taxon>Bacteria</taxon>
        <taxon>Bacillati</taxon>
        <taxon>Bacillota</taxon>
        <taxon>Clostridia</taxon>
        <taxon>Eubacteriales</taxon>
        <taxon>Oscillospiraceae</taxon>
        <taxon>Ruminiclostridium</taxon>
    </lineage>
</organism>
<accession>B8I6M0</accession>
<reference key="1">
    <citation type="submission" date="2009-01" db="EMBL/GenBank/DDBJ databases">
        <title>Complete sequence of Clostridium cellulolyticum H10.</title>
        <authorList>
            <consortium name="US DOE Joint Genome Institute"/>
            <person name="Lucas S."/>
            <person name="Copeland A."/>
            <person name="Lapidus A."/>
            <person name="Glavina del Rio T."/>
            <person name="Dalin E."/>
            <person name="Tice H."/>
            <person name="Bruce D."/>
            <person name="Goodwin L."/>
            <person name="Pitluck S."/>
            <person name="Chertkov O."/>
            <person name="Saunders E."/>
            <person name="Brettin T."/>
            <person name="Detter J.C."/>
            <person name="Han C."/>
            <person name="Larimer F."/>
            <person name="Land M."/>
            <person name="Hauser L."/>
            <person name="Kyrpides N."/>
            <person name="Ivanova N."/>
            <person name="Zhou J."/>
            <person name="Richardson P."/>
        </authorList>
    </citation>
    <scope>NUCLEOTIDE SEQUENCE [LARGE SCALE GENOMIC DNA]</scope>
    <source>
        <strain>ATCC 35319 / DSM 5812 / JCM 6584 / H10</strain>
    </source>
</reference>
<evidence type="ECO:0000255" key="1">
    <source>
        <dbReference type="HAMAP-Rule" id="MF_00168"/>
    </source>
</evidence>
<comment type="function">
    <text evidence="1">Catalyzes the base-exchange of a guanine (G) residue with the queuine precursor 7-aminomethyl-7-deazaguanine (PreQ1) at position 34 (anticodon wobble position) in tRNAs with GU(N) anticodons (tRNA-Asp, -Asn, -His and -Tyr). Catalysis occurs through a double-displacement mechanism. The nucleophile active site attacks the C1' of nucleotide 34 to detach the guanine base from the RNA, forming a covalent enzyme-RNA intermediate. The proton acceptor active site deprotonates the incoming PreQ1, allowing a nucleophilic attack on the C1' of the ribose to form the product. After dissociation, two additional enzymatic reactions on the tRNA convert PreQ1 to queuine (Q), resulting in the hypermodified nucleoside queuosine (7-(((4,5-cis-dihydroxy-2-cyclopenten-1-yl)amino)methyl)-7-deazaguanosine).</text>
</comment>
<comment type="catalytic activity">
    <reaction evidence="1">
        <text>7-aminomethyl-7-carbaguanine + guanosine(34) in tRNA = 7-aminomethyl-7-carbaguanosine(34) in tRNA + guanine</text>
        <dbReference type="Rhea" id="RHEA:24104"/>
        <dbReference type="Rhea" id="RHEA-COMP:10341"/>
        <dbReference type="Rhea" id="RHEA-COMP:10342"/>
        <dbReference type="ChEBI" id="CHEBI:16235"/>
        <dbReference type="ChEBI" id="CHEBI:58703"/>
        <dbReference type="ChEBI" id="CHEBI:74269"/>
        <dbReference type="ChEBI" id="CHEBI:82833"/>
        <dbReference type="EC" id="2.4.2.29"/>
    </reaction>
</comment>
<comment type="cofactor">
    <cofactor evidence="1">
        <name>Zn(2+)</name>
        <dbReference type="ChEBI" id="CHEBI:29105"/>
    </cofactor>
    <text evidence="1">Binds 1 zinc ion per subunit.</text>
</comment>
<comment type="pathway">
    <text evidence="1">tRNA modification; tRNA-queuosine biosynthesis.</text>
</comment>
<comment type="subunit">
    <text evidence="1">Homodimer. Within each dimer, one monomer is responsible for RNA recognition and catalysis, while the other monomer binds to the replacement base PreQ1.</text>
</comment>
<comment type="similarity">
    <text evidence="1">Belongs to the queuine tRNA-ribosyltransferase family.</text>
</comment>